<reference key="1">
    <citation type="journal article" date="2009" name="PLoS Genet.">
        <title>Organised genome dynamics in the Escherichia coli species results in highly diverse adaptive paths.</title>
        <authorList>
            <person name="Touchon M."/>
            <person name="Hoede C."/>
            <person name="Tenaillon O."/>
            <person name="Barbe V."/>
            <person name="Baeriswyl S."/>
            <person name="Bidet P."/>
            <person name="Bingen E."/>
            <person name="Bonacorsi S."/>
            <person name="Bouchier C."/>
            <person name="Bouvet O."/>
            <person name="Calteau A."/>
            <person name="Chiapello H."/>
            <person name="Clermont O."/>
            <person name="Cruveiller S."/>
            <person name="Danchin A."/>
            <person name="Diard M."/>
            <person name="Dossat C."/>
            <person name="Karoui M.E."/>
            <person name="Frapy E."/>
            <person name="Garry L."/>
            <person name="Ghigo J.M."/>
            <person name="Gilles A.M."/>
            <person name="Johnson J."/>
            <person name="Le Bouguenec C."/>
            <person name="Lescat M."/>
            <person name="Mangenot S."/>
            <person name="Martinez-Jehanne V."/>
            <person name="Matic I."/>
            <person name="Nassif X."/>
            <person name="Oztas S."/>
            <person name="Petit M.A."/>
            <person name="Pichon C."/>
            <person name="Rouy Z."/>
            <person name="Ruf C.S."/>
            <person name="Schneider D."/>
            <person name="Tourret J."/>
            <person name="Vacherie B."/>
            <person name="Vallenet D."/>
            <person name="Medigue C."/>
            <person name="Rocha E.P.C."/>
            <person name="Denamur E."/>
        </authorList>
    </citation>
    <scope>NUCLEOTIDE SEQUENCE [LARGE SCALE GENOMIC DNA]</scope>
    <source>
        <strain>ATCC 35469 / DSM 13698 / BCRC 15582 / CCUG 18766 / IAM 14443 / JCM 21226 / LMG 7866 / NBRC 102419 / NCTC 12128 / CDC 0568-73</strain>
    </source>
</reference>
<feature type="chain" id="PRO_1000118622" description="NH(3)-dependent NAD(+) synthetase">
    <location>
        <begin position="1"/>
        <end position="275"/>
    </location>
</feature>
<feature type="binding site" evidence="1">
    <location>
        <begin position="46"/>
        <end position="53"/>
    </location>
    <ligand>
        <name>ATP</name>
        <dbReference type="ChEBI" id="CHEBI:30616"/>
    </ligand>
</feature>
<feature type="binding site" evidence="1">
    <location>
        <position position="52"/>
    </location>
    <ligand>
        <name>Mg(2+)</name>
        <dbReference type="ChEBI" id="CHEBI:18420"/>
    </ligand>
</feature>
<feature type="binding site" evidence="1">
    <location>
        <position position="140"/>
    </location>
    <ligand>
        <name>deamido-NAD(+)</name>
        <dbReference type="ChEBI" id="CHEBI:58437"/>
    </ligand>
</feature>
<feature type="binding site" evidence="1">
    <location>
        <position position="160"/>
    </location>
    <ligand>
        <name>ATP</name>
        <dbReference type="ChEBI" id="CHEBI:30616"/>
    </ligand>
</feature>
<feature type="binding site" evidence="1">
    <location>
        <position position="165"/>
    </location>
    <ligand>
        <name>Mg(2+)</name>
        <dbReference type="ChEBI" id="CHEBI:18420"/>
    </ligand>
</feature>
<feature type="binding site" evidence="1">
    <location>
        <position position="173"/>
    </location>
    <ligand>
        <name>deamido-NAD(+)</name>
        <dbReference type="ChEBI" id="CHEBI:58437"/>
    </ligand>
</feature>
<feature type="binding site" evidence="1">
    <location>
        <position position="180"/>
    </location>
    <ligand>
        <name>deamido-NAD(+)</name>
        <dbReference type="ChEBI" id="CHEBI:58437"/>
    </ligand>
</feature>
<feature type="binding site" evidence="1">
    <location>
        <position position="189"/>
    </location>
    <ligand>
        <name>ATP</name>
        <dbReference type="ChEBI" id="CHEBI:30616"/>
    </ligand>
</feature>
<feature type="binding site" evidence="1">
    <location>
        <position position="211"/>
    </location>
    <ligand>
        <name>ATP</name>
        <dbReference type="ChEBI" id="CHEBI:30616"/>
    </ligand>
</feature>
<feature type="binding site" evidence="1">
    <location>
        <begin position="260"/>
        <end position="261"/>
    </location>
    <ligand>
        <name>deamido-NAD(+)</name>
        <dbReference type="ChEBI" id="CHEBI:58437"/>
    </ligand>
</feature>
<dbReference type="EC" id="6.3.1.5" evidence="1"/>
<dbReference type="EMBL" id="CU928158">
    <property type="protein sequence ID" value="CAQ88849.1"/>
    <property type="molecule type" value="Genomic_DNA"/>
</dbReference>
<dbReference type="RefSeq" id="WP_000175006.1">
    <property type="nucleotide sequence ID" value="NC_011740.1"/>
</dbReference>
<dbReference type="SMR" id="B7LQ52"/>
<dbReference type="GeneID" id="75057631"/>
<dbReference type="KEGG" id="efe:EFER_1327"/>
<dbReference type="HOGENOM" id="CLU_059327_3_0_6"/>
<dbReference type="OrthoDB" id="3266517at2"/>
<dbReference type="UniPathway" id="UPA00253">
    <property type="reaction ID" value="UER00333"/>
</dbReference>
<dbReference type="Proteomes" id="UP000000745">
    <property type="component" value="Chromosome"/>
</dbReference>
<dbReference type="GO" id="GO:0005737">
    <property type="term" value="C:cytoplasm"/>
    <property type="evidence" value="ECO:0007669"/>
    <property type="project" value="InterPro"/>
</dbReference>
<dbReference type="GO" id="GO:0005524">
    <property type="term" value="F:ATP binding"/>
    <property type="evidence" value="ECO:0007669"/>
    <property type="project" value="UniProtKB-UniRule"/>
</dbReference>
<dbReference type="GO" id="GO:0004359">
    <property type="term" value="F:glutaminase activity"/>
    <property type="evidence" value="ECO:0007669"/>
    <property type="project" value="InterPro"/>
</dbReference>
<dbReference type="GO" id="GO:0046872">
    <property type="term" value="F:metal ion binding"/>
    <property type="evidence" value="ECO:0007669"/>
    <property type="project" value="UniProtKB-KW"/>
</dbReference>
<dbReference type="GO" id="GO:0003952">
    <property type="term" value="F:NAD+ synthase (glutamine-hydrolyzing) activity"/>
    <property type="evidence" value="ECO:0007669"/>
    <property type="project" value="InterPro"/>
</dbReference>
<dbReference type="GO" id="GO:0008795">
    <property type="term" value="F:NAD+ synthase activity"/>
    <property type="evidence" value="ECO:0007669"/>
    <property type="project" value="UniProtKB-UniRule"/>
</dbReference>
<dbReference type="GO" id="GO:0009435">
    <property type="term" value="P:NAD biosynthetic process"/>
    <property type="evidence" value="ECO:0007669"/>
    <property type="project" value="UniProtKB-UniRule"/>
</dbReference>
<dbReference type="CDD" id="cd00553">
    <property type="entry name" value="NAD_synthase"/>
    <property type="match status" value="1"/>
</dbReference>
<dbReference type="FunFam" id="3.40.50.620:FF:000015">
    <property type="entry name" value="NH(3)-dependent NAD(+) synthetase"/>
    <property type="match status" value="1"/>
</dbReference>
<dbReference type="Gene3D" id="3.40.50.620">
    <property type="entry name" value="HUPs"/>
    <property type="match status" value="1"/>
</dbReference>
<dbReference type="HAMAP" id="MF_00193">
    <property type="entry name" value="NadE_ammonia_dep"/>
    <property type="match status" value="1"/>
</dbReference>
<dbReference type="InterPro" id="IPR022310">
    <property type="entry name" value="NAD/GMP_synthase"/>
</dbReference>
<dbReference type="InterPro" id="IPR003694">
    <property type="entry name" value="NAD_synthase"/>
</dbReference>
<dbReference type="InterPro" id="IPR022926">
    <property type="entry name" value="NH(3)-dep_NAD(+)_synth"/>
</dbReference>
<dbReference type="InterPro" id="IPR014729">
    <property type="entry name" value="Rossmann-like_a/b/a_fold"/>
</dbReference>
<dbReference type="NCBIfam" id="TIGR00552">
    <property type="entry name" value="nadE"/>
    <property type="match status" value="1"/>
</dbReference>
<dbReference type="NCBIfam" id="NF001979">
    <property type="entry name" value="PRK00768.1"/>
    <property type="match status" value="1"/>
</dbReference>
<dbReference type="PANTHER" id="PTHR23090">
    <property type="entry name" value="NH 3 /GLUTAMINE-DEPENDENT NAD + SYNTHETASE"/>
    <property type="match status" value="1"/>
</dbReference>
<dbReference type="PANTHER" id="PTHR23090:SF7">
    <property type="entry name" value="NH(3)-DEPENDENT NAD(+) SYNTHETASE"/>
    <property type="match status" value="1"/>
</dbReference>
<dbReference type="Pfam" id="PF02540">
    <property type="entry name" value="NAD_synthase"/>
    <property type="match status" value="1"/>
</dbReference>
<dbReference type="SUPFAM" id="SSF52402">
    <property type="entry name" value="Adenine nucleotide alpha hydrolases-like"/>
    <property type="match status" value="1"/>
</dbReference>
<gene>
    <name evidence="1" type="primary">nadE</name>
    <name type="ordered locus">EFER_1327</name>
</gene>
<evidence type="ECO:0000255" key="1">
    <source>
        <dbReference type="HAMAP-Rule" id="MF_00193"/>
    </source>
</evidence>
<sequence>MTLQQQIIKALGAKPQINAEEEIRRSIDFLKSYLKTYPFLKSLVLGISGGQDSTLAGKLCQMAINELRAETGNETLQFIAVRLPYGIQADEQDCQDAIAFIQPDRVLTVNIKGAVLASEQALREAGIELSDFVRGNEKARERMKAQYSIAGMTSGVVVGTDHAAEAITGFFTKYGDGGTDINPLYRLNKRQGKQLLAALGCPEHLYKKAPTADLEDDRPSLPDEAALGVSYDNIDDYLEGKTVPEQVAKTIENWYLKTEHKRRPPITVFDDFWKK</sequence>
<keyword id="KW-0067">ATP-binding</keyword>
<keyword id="KW-0436">Ligase</keyword>
<keyword id="KW-0460">Magnesium</keyword>
<keyword id="KW-0479">Metal-binding</keyword>
<keyword id="KW-0520">NAD</keyword>
<keyword id="KW-0547">Nucleotide-binding</keyword>
<name>NADE_ESCF3</name>
<comment type="function">
    <text evidence="1">Catalyzes the ATP-dependent amidation of deamido-NAD to form NAD. Uses ammonia as a nitrogen source.</text>
</comment>
<comment type="catalytic activity">
    <reaction evidence="1">
        <text>deamido-NAD(+) + NH4(+) + ATP = AMP + diphosphate + NAD(+) + H(+)</text>
        <dbReference type="Rhea" id="RHEA:21188"/>
        <dbReference type="ChEBI" id="CHEBI:15378"/>
        <dbReference type="ChEBI" id="CHEBI:28938"/>
        <dbReference type="ChEBI" id="CHEBI:30616"/>
        <dbReference type="ChEBI" id="CHEBI:33019"/>
        <dbReference type="ChEBI" id="CHEBI:57540"/>
        <dbReference type="ChEBI" id="CHEBI:58437"/>
        <dbReference type="ChEBI" id="CHEBI:456215"/>
        <dbReference type="EC" id="6.3.1.5"/>
    </reaction>
</comment>
<comment type="pathway">
    <text evidence="1">Cofactor biosynthesis; NAD(+) biosynthesis; NAD(+) from deamido-NAD(+) (ammonia route): step 1/1.</text>
</comment>
<comment type="subunit">
    <text evidence="1">Homodimer.</text>
</comment>
<comment type="similarity">
    <text evidence="1">Belongs to the NAD synthetase family.</text>
</comment>
<proteinExistence type="inferred from homology"/>
<organism>
    <name type="scientific">Escherichia fergusonii (strain ATCC 35469 / DSM 13698 / CCUG 18766 / IAM 14443 / JCM 21226 / LMG 7866 / NBRC 102419 / NCTC 12128 / CDC 0568-73)</name>
    <dbReference type="NCBI Taxonomy" id="585054"/>
    <lineage>
        <taxon>Bacteria</taxon>
        <taxon>Pseudomonadati</taxon>
        <taxon>Pseudomonadota</taxon>
        <taxon>Gammaproteobacteria</taxon>
        <taxon>Enterobacterales</taxon>
        <taxon>Enterobacteriaceae</taxon>
        <taxon>Escherichia</taxon>
    </lineage>
</organism>
<accession>B7LQ52</accession>
<protein>
    <recommendedName>
        <fullName evidence="1">NH(3)-dependent NAD(+) synthetase</fullName>
        <ecNumber evidence="1">6.3.1.5</ecNumber>
    </recommendedName>
</protein>